<proteinExistence type="inferred from homology"/>
<dbReference type="EMBL" id="FN393071">
    <property type="protein sequence ID" value="CAY80159.1"/>
    <property type="molecule type" value="Genomic_DNA"/>
</dbReference>
<dbReference type="SMR" id="C8Z9U3"/>
<dbReference type="CAZy" id="CBM48">
    <property type="family name" value="Carbohydrate-Binding Module Family 48"/>
</dbReference>
<dbReference type="HOGENOM" id="CLU_594765_0_0_1"/>
<dbReference type="OrthoDB" id="40992at4893"/>
<dbReference type="Proteomes" id="UP000000286">
    <property type="component" value="Chromosome VIII, Scaffold EC1118_1H13"/>
</dbReference>
<dbReference type="GO" id="GO:0005737">
    <property type="term" value="C:cytoplasm"/>
    <property type="evidence" value="ECO:0007669"/>
    <property type="project" value="TreeGrafter"/>
</dbReference>
<dbReference type="GO" id="GO:0031588">
    <property type="term" value="C:nucleotide-activated protein kinase complex"/>
    <property type="evidence" value="ECO:0007669"/>
    <property type="project" value="TreeGrafter"/>
</dbReference>
<dbReference type="GO" id="GO:0005634">
    <property type="term" value="C:nucleus"/>
    <property type="evidence" value="ECO:0007669"/>
    <property type="project" value="TreeGrafter"/>
</dbReference>
<dbReference type="GO" id="GO:0003677">
    <property type="term" value="F:DNA binding"/>
    <property type="evidence" value="ECO:0007669"/>
    <property type="project" value="UniProtKB-KW"/>
</dbReference>
<dbReference type="GO" id="GO:0019901">
    <property type="term" value="F:protein kinase binding"/>
    <property type="evidence" value="ECO:0007669"/>
    <property type="project" value="TreeGrafter"/>
</dbReference>
<dbReference type="GO" id="GO:0007165">
    <property type="term" value="P:signal transduction"/>
    <property type="evidence" value="ECO:0007669"/>
    <property type="project" value="TreeGrafter"/>
</dbReference>
<dbReference type="CDD" id="cd02859">
    <property type="entry name" value="E_set_AMPKbeta_like_N"/>
    <property type="match status" value="1"/>
</dbReference>
<dbReference type="FunFam" id="2.60.40.10:FF:001765">
    <property type="entry name" value="Cruciform DNA-recognizing protein 1"/>
    <property type="match status" value="1"/>
</dbReference>
<dbReference type="Gene3D" id="2.60.40.10">
    <property type="entry name" value="Immunoglobulins"/>
    <property type="match status" value="1"/>
</dbReference>
<dbReference type="InterPro" id="IPR032640">
    <property type="entry name" value="AMPK1_CBM"/>
</dbReference>
<dbReference type="InterPro" id="IPR050827">
    <property type="entry name" value="CRP1_MDG1_kinase"/>
</dbReference>
<dbReference type="InterPro" id="IPR013783">
    <property type="entry name" value="Ig-like_fold"/>
</dbReference>
<dbReference type="InterPro" id="IPR014756">
    <property type="entry name" value="Ig_E-set"/>
</dbReference>
<dbReference type="PANTHER" id="PTHR10343">
    <property type="entry name" value="5'-AMP-ACTIVATED PROTEIN KINASE , BETA SUBUNIT"/>
    <property type="match status" value="1"/>
</dbReference>
<dbReference type="PANTHER" id="PTHR10343:SF81">
    <property type="entry name" value="CRUCIFORM DNA-RECOGNIZING PROTEIN 1-RELATED"/>
    <property type="match status" value="1"/>
</dbReference>
<dbReference type="Pfam" id="PF16561">
    <property type="entry name" value="AMPK1_CBM"/>
    <property type="match status" value="1"/>
</dbReference>
<dbReference type="SUPFAM" id="SSF81296">
    <property type="entry name" value="E set domains"/>
    <property type="match status" value="1"/>
</dbReference>
<sequence>MSSELMFNYTFSWPAGPKDVILTGTFDDWRGTLPLVKTAKGNFEITMPVKLANKDDTFQFKFIVDGVWCVSDSYKKEHVSEGIENNFLQITDLVETQEVAGASRIPEAGGLLCGKPPRSAGPPSTSNRKKNKRNNKKRRSKLKKKSTKNNKKSNESLDDNEEEDGVTGTTTEDVTGTSREETPLAEPTNVSKEAPGNFHILPIDQSADTTKSNGIIGGPGPVLVPNPGEIKEFTEIRDVDARELNERLNKKEEVPEPVAGPIVESSVTEKSPALPQADDPIVETKEVAHNVQELTPQVEAVTPLINEPEPLPTPEAQISIPESSKVEPVEGSLQSKLVEKRESTEGVLDGSKKVENKAKKDEEVFTLDPIVNKAPKLPLTDEQTAEGRKSPAVSEEKEKKKKQEKGSKEVKRSETSKEKKPSAKEVKKQTVKASKKQTASPLSSSTEEPKKKKTGFFGKLKKLFK</sequence>
<comment type="function">
    <text evidence="1">Cruciform DNA-binding protein which exerts an enhancing effect on the cleavage of cruciform DNA (X-DNA) by endonuclease VII from bacteriophage T4.</text>
</comment>
<comment type="PTM">
    <text evidence="1">Cleaved in the vicinity of position 160 to give an X-DNA-binding N-terminal subpeptide and a non-DNA-binding C-terminal subpeptide.</text>
</comment>
<comment type="similarity">
    <text evidence="4">Belongs to the CRP1/MDG1 family.</text>
</comment>
<protein>
    <recommendedName>
        <fullName>Cruciform DNA-recognizing protein 1</fullName>
    </recommendedName>
    <component>
        <recommendedName>
            <fullName>CRP1 short N-terminal subpeptide</fullName>
        </recommendedName>
    </component>
    <component>
        <recommendedName>
            <fullName>CRP1 short C-terminal subpeptide</fullName>
        </recommendedName>
    </component>
</protein>
<organism>
    <name type="scientific">Saccharomyces cerevisiae (strain Lalvin EC1118 / Prise de mousse)</name>
    <name type="common">Baker's yeast</name>
    <dbReference type="NCBI Taxonomy" id="643680"/>
    <lineage>
        <taxon>Eukaryota</taxon>
        <taxon>Fungi</taxon>
        <taxon>Dikarya</taxon>
        <taxon>Ascomycota</taxon>
        <taxon>Saccharomycotina</taxon>
        <taxon>Saccharomycetes</taxon>
        <taxon>Saccharomycetales</taxon>
        <taxon>Saccharomycetaceae</taxon>
        <taxon>Saccharomyces</taxon>
    </lineage>
</organism>
<feature type="chain" id="PRO_0000409605" description="Cruciform DNA-recognizing protein 1">
    <location>
        <begin position="1"/>
        <end position="465"/>
    </location>
</feature>
<feature type="chain" id="PRO_0000409606" description="CRP1 short N-terminal subpeptide" evidence="1">
    <location>
        <begin position="1"/>
        <end position="160"/>
    </location>
</feature>
<feature type="chain" id="PRO_0000409607" description="CRP1 short C-terminal subpeptide" evidence="1">
    <location>
        <begin position="161"/>
        <end position="465"/>
    </location>
</feature>
<feature type="region of interest" description="Disordered" evidence="3">
    <location>
        <begin position="107"/>
        <end position="227"/>
    </location>
</feature>
<feature type="region of interest" description="X-DNA-binding" evidence="1">
    <location>
        <begin position="160"/>
        <end position="161"/>
    </location>
</feature>
<feature type="region of interest" description="Disordered" evidence="3">
    <location>
        <begin position="247"/>
        <end position="276"/>
    </location>
</feature>
<feature type="region of interest" description="Disordered" evidence="3">
    <location>
        <begin position="298"/>
        <end position="465"/>
    </location>
</feature>
<feature type="compositionally biased region" description="Basic residues" evidence="3">
    <location>
        <begin position="127"/>
        <end position="151"/>
    </location>
</feature>
<feature type="compositionally biased region" description="Acidic residues" evidence="3">
    <location>
        <begin position="156"/>
        <end position="165"/>
    </location>
</feature>
<feature type="compositionally biased region" description="Low complexity" evidence="3">
    <location>
        <begin position="166"/>
        <end position="177"/>
    </location>
</feature>
<feature type="compositionally biased region" description="Basic and acidic residues" evidence="3">
    <location>
        <begin position="337"/>
        <end position="363"/>
    </location>
</feature>
<feature type="compositionally biased region" description="Basic and acidic residues" evidence="3">
    <location>
        <begin position="385"/>
        <end position="398"/>
    </location>
</feature>
<feature type="compositionally biased region" description="Basic and acidic residues" evidence="3">
    <location>
        <begin position="404"/>
        <end position="428"/>
    </location>
</feature>
<feature type="compositionally biased region" description="Basic residues" evidence="3">
    <location>
        <begin position="451"/>
        <end position="465"/>
    </location>
</feature>
<feature type="modified residue" description="Phosphoserine" evidence="2">
    <location>
        <position position="153"/>
    </location>
</feature>
<feature type="modified residue" description="Phosphoserine" evidence="2">
    <location>
        <position position="156"/>
    </location>
</feature>
<feature type="modified residue" description="Phosphothreonine" evidence="2">
    <location>
        <position position="182"/>
    </location>
</feature>
<feature type="modified residue" description="Phosphoserine" evidence="2">
    <location>
        <position position="271"/>
    </location>
</feature>
<feature type="modified residue" description="Phosphothreonine" evidence="2">
    <location>
        <position position="295"/>
    </location>
</feature>
<feature type="modified residue" description="Phosphoserine" evidence="2">
    <location>
        <position position="319"/>
    </location>
</feature>
<feature type="modified residue" description="Phosphoserine" evidence="2">
    <location>
        <position position="343"/>
    </location>
</feature>
<feature type="modified residue" description="Phosphothreonine" evidence="2">
    <location>
        <position position="366"/>
    </location>
</feature>
<feature type="modified residue" description="Phosphoserine" evidence="2">
    <location>
        <position position="394"/>
    </location>
</feature>
<feature type="modified residue" description="Phosphoserine" evidence="2">
    <location>
        <position position="440"/>
    </location>
</feature>
<evidence type="ECO:0000250" key="1"/>
<evidence type="ECO:0000250" key="2">
    <source>
        <dbReference type="UniProtKB" id="P38845"/>
    </source>
</evidence>
<evidence type="ECO:0000256" key="3">
    <source>
        <dbReference type="SAM" id="MobiDB-lite"/>
    </source>
</evidence>
<evidence type="ECO:0000305" key="4"/>
<keyword id="KW-0238">DNA-binding</keyword>
<keyword id="KW-0597">Phosphoprotein</keyword>
<name>CRP1_YEAS8</name>
<accession>C8Z9U3</accession>
<reference key="1">
    <citation type="journal article" date="2009" name="Proc. Natl. Acad. Sci. U.S.A.">
        <title>Eukaryote-to-eukaryote gene transfer events revealed by the genome sequence of the wine yeast Saccharomyces cerevisiae EC1118.</title>
        <authorList>
            <person name="Novo M."/>
            <person name="Bigey F."/>
            <person name="Beyne E."/>
            <person name="Galeote V."/>
            <person name="Gavory F."/>
            <person name="Mallet S."/>
            <person name="Cambon B."/>
            <person name="Legras J.-L."/>
            <person name="Wincker P."/>
            <person name="Casaregola S."/>
            <person name="Dequin S."/>
        </authorList>
    </citation>
    <scope>NUCLEOTIDE SEQUENCE [LARGE SCALE GENOMIC DNA]</scope>
    <source>
        <strain>Lalvin EC1118 / Prise de mousse</strain>
    </source>
</reference>
<gene>
    <name type="primary">CRP1</name>
    <name type="ORF">EC1118_1H13_1200g</name>
</gene>